<proteinExistence type="inferred from homology"/>
<keyword id="KW-0067">ATP-binding</keyword>
<keyword id="KW-0342">GTP-binding</keyword>
<keyword id="KW-0547">Nucleotide-binding</keyword>
<keyword id="KW-1185">Reference proteome</keyword>
<dbReference type="EMBL" id="AP009256">
    <property type="protein sequence ID" value="BAF39618.1"/>
    <property type="molecule type" value="Genomic_DNA"/>
</dbReference>
<dbReference type="SMR" id="A1A1N5"/>
<dbReference type="STRING" id="367928.BAD_0837"/>
<dbReference type="PaxDb" id="1680-BADO_0890"/>
<dbReference type="GeneID" id="4557114"/>
<dbReference type="KEGG" id="bad:BAD_0837"/>
<dbReference type="HOGENOM" id="CLU_059558_0_0_11"/>
<dbReference type="Proteomes" id="UP000008702">
    <property type="component" value="Chromosome"/>
</dbReference>
<dbReference type="GO" id="GO:0005524">
    <property type="term" value="F:ATP binding"/>
    <property type="evidence" value="ECO:0007669"/>
    <property type="project" value="UniProtKB-UniRule"/>
</dbReference>
<dbReference type="GO" id="GO:0005525">
    <property type="term" value="F:GTP binding"/>
    <property type="evidence" value="ECO:0007669"/>
    <property type="project" value="UniProtKB-UniRule"/>
</dbReference>
<dbReference type="Gene3D" id="3.40.50.300">
    <property type="entry name" value="P-loop containing nucleotide triphosphate hydrolases"/>
    <property type="match status" value="1"/>
</dbReference>
<dbReference type="HAMAP" id="MF_00636">
    <property type="entry name" value="RapZ_like"/>
    <property type="match status" value="1"/>
</dbReference>
<dbReference type="InterPro" id="IPR027417">
    <property type="entry name" value="P-loop_NTPase"/>
</dbReference>
<dbReference type="InterPro" id="IPR005337">
    <property type="entry name" value="RapZ-like"/>
</dbReference>
<dbReference type="InterPro" id="IPR053930">
    <property type="entry name" value="RapZ-like_N"/>
</dbReference>
<dbReference type="InterPro" id="IPR053931">
    <property type="entry name" value="RapZ_C"/>
</dbReference>
<dbReference type="NCBIfam" id="NF003828">
    <property type="entry name" value="PRK05416.1"/>
    <property type="match status" value="1"/>
</dbReference>
<dbReference type="PANTHER" id="PTHR30448">
    <property type="entry name" value="RNASE ADAPTER PROTEIN RAPZ"/>
    <property type="match status" value="1"/>
</dbReference>
<dbReference type="PANTHER" id="PTHR30448:SF0">
    <property type="entry name" value="RNASE ADAPTER PROTEIN RAPZ"/>
    <property type="match status" value="1"/>
</dbReference>
<dbReference type="Pfam" id="PF22740">
    <property type="entry name" value="PapZ_C"/>
    <property type="match status" value="1"/>
</dbReference>
<dbReference type="Pfam" id="PF03668">
    <property type="entry name" value="RapZ-like_N"/>
    <property type="match status" value="1"/>
</dbReference>
<dbReference type="PIRSF" id="PIRSF005052">
    <property type="entry name" value="P-loopkin"/>
    <property type="match status" value="1"/>
</dbReference>
<dbReference type="SUPFAM" id="SSF52540">
    <property type="entry name" value="P-loop containing nucleoside triphosphate hydrolases"/>
    <property type="match status" value="1"/>
</dbReference>
<organism>
    <name type="scientific">Bifidobacterium adolescentis (strain ATCC 15703 / DSM 20083 / NCTC 11814 / E194a)</name>
    <dbReference type="NCBI Taxonomy" id="367928"/>
    <lineage>
        <taxon>Bacteria</taxon>
        <taxon>Bacillati</taxon>
        <taxon>Actinomycetota</taxon>
        <taxon>Actinomycetes</taxon>
        <taxon>Bifidobacteriales</taxon>
        <taxon>Bifidobacteriaceae</taxon>
        <taxon>Bifidobacterium</taxon>
    </lineage>
</organism>
<reference key="1">
    <citation type="submission" date="2006-12" db="EMBL/GenBank/DDBJ databases">
        <title>Bifidobacterium adolescentis complete genome sequence.</title>
        <authorList>
            <person name="Suzuki T."/>
            <person name="Tsuda Y."/>
            <person name="Kanou N."/>
            <person name="Inoue T."/>
            <person name="Kumazaki K."/>
            <person name="Nagano S."/>
            <person name="Hirai S."/>
            <person name="Tanaka K."/>
            <person name="Watanabe K."/>
        </authorList>
    </citation>
    <scope>NUCLEOTIDE SEQUENCE [LARGE SCALE GENOMIC DNA]</scope>
    <source>
        <strain>ATCC 15703 / DSM 20083 / NCTC 11814 / E194a</strain>
    </source>
</reference>
<feature type="chain" id="PRO_1000056807" description="Nucleotide-binding protein BAD_0837">
    <location>
        <begin position="1"/>
        <end position="310"/>
    </location>
</feature>
<feature type="binding site" evidence="1">
    <location>
        <begin position="31"/>
        <end position="38"/>
    </location>
    <ligand>
        <name>ATP</name>
        <dbReference type="ChEBI" id="CHEBI:30616"/>
    </ligand>
</feature>
<feature type="binding site" evidence="1">
    <location>
        <begin position="82"/>
        <end position="85"/>
    </location>
    <ligand>
        <name>GTP</name>
        <dbReference type="ChEBI" id="CHEBI:37565"/>
    </ligand>
</feature>
<protein>
    <recommendedName>
        <fullName evidence="1">Nucleotide-binding protein BAD_0837</fullName>
    </recommendedName>
</protein>
<evidence type="ECO:0000255" key="1">
    <source>
        <dbReference type="HAMAP-Rule" id="MF_00636"/>
    </source>
</evidence>
<name>Y837_BIFAA</name>
<accession>A1A1N5</accession>
<gene>
    <name type="ordered locus">BAD_0837</name>
</gene>
<comment type="function">
    <text evidence="1">Displays ATPase and GTPase activities.</text>
</comment>
<comment type="similarity">
    <text evidence="1">Belongs to the RapZ-like family.</text>
</comment>
<sequence>MNEKNNAVNQAGRHTSAPSPAAGFEVLLITGMSGAGRSHAANSIEDMGWYVVDNMPPKLLVPLVDMMTSSGSNIHKLAAVIDVRSRDYFDDLSAVLSHLDDLGVKTRILFLDASNEVLIKRYESVRRPHPLQQGNRLIDGILEERDLLKNLKEHADIVIDTSALSIHQLSTKLYEGLLGSGPTTVSVHIFSFGFKYGIPIDADFVADVRFLPNPFWVPELRSLTGKDKPVSDYVLSSEGAEEFLDAYEKAIAIAIEGYAQEDKHYVTIAFGCTGGQHRSVAMSEALAKRLRARGLTVSVSARELDKRSAD</sequence>